<protein>
    <recommendedName>
        <fullName evidence="1">Deoxyuridine 5'-triphosphate nucleotidohydrolase</fullName>
        <shortName evidence="1">dUTPase</shortName>
        <ecNumber evidence="1">3.6.1.23</ecNumber>
    </recommendedName>
    <alternativeName>
        <fullName evidence="1">dUTP pyrophosphatase</fullName>
    </alternativeName>
</protein>
<sequence length="149" mass="15934">MQKLAVKIKKLENFHGDLPQYQSLGASGFDVRAQLAGPVVLNPGERAMIPTGLSFEIPLGYEIQARPRSGWAAKSGLTVLNTPGTIDADYRGEVKIIVINLGNEAVTINDQERCAQLVLAPVIQAQFELVNELSDTERGAGGFGSTGRA</sequence>
<comment type="function">
    <text evidence="1">This enzyme is involved in nucleotide metabolism: it produces dUMP, the immediate precursor of thymidine nucleotides and it decreases the intracellular concentration of dUTP so that uracil cannot be incorporated into DNA.</text>
</comment>
<comment type="catalytic activity">
    <reaction evidence="1">
        <text>dUTP + H2O = dUMP + diphosphate + H(+)</text>
        <dbReference type="Rhea" id="RHEA:10248"/>
        <dbReference type="ChEBI" id="CHEBI:15377"/>
        <dbReference type="ChEBI" id="CHEBI:15378"/>
        <dbReference type="ChEBI" id="CHEBI:33019"/>
        <dbReference type="ChEBI" id="CHEBI:61555"/>
        <dbReference type="ChEBI" id="CHEBI:246422"/>
        <dbReference type="EC" id="3.6.1.23"/>
    </reaction>
</comment>
<comment type="cofactor">
    <cofactor evidence="1">
        <name>Mg(2+)</name>
        <dbReference type="ChEBI" id="CHEBI:18420"/>
    </cofactor>
</comment>
<comment type="pathway">
    <text evidence="1">Pyrimidine metabolism; dUMP biosynthesis; dUMP from dCTP (dUTP route): step 2/2.</text>
</comment>
<comment type="similarity">
    <text evidence="1">Belongs to the dUTPase family.</text>
</comment>
<keyword id="KW-0378">Hydrolase</keyword>
<keyword id="KW-0460">Magnesium</keyword>
<keyword id="KW-0479">Metal-binding</keyword>
<keyword id="KW-0546">Nucleotide metabolism</keyword>
<keyword id="KW-1185">Reference proteome</keyword>
<dbReference type="EC" id="3.6.1.23" evidence="1"/>
<dbReference type="EMBL" id="BX842650">
    <property type="protein sequence ID" value="CAE79433.1"/>
    <property type="molecule type" value="Genomic_DNA"/>
</dbReference>
<dbReference type="RefSeq" id="WP_011164035.1">
    <property type="nucleotide sequence ID" value="NC_005363.1"/>
</dbReference>
<dbReference type="SMR" id="P61906"/>
<dbReference type="STRING" id="264462.Bd1553"/>
<dbReference type="GeneID" id="93012550"/>
<dbReference type="KEGG" id="bba:Bd1553"/>
<dbReference type="eggNOG" id="COG0756">
    <property type="taxonomic scope" value="Bacteria"/>
</dbReference>
<dbReference type="HOGENOM" id="CLU_068508_1_2_7"/>
<dbReference type="UniPathway" id="UPA00610">
    <property type="reaction ID" value="UER00666"/>
</dbReference>
<dbReference type="Proteomes" id="UP000008080">
    <property type="component" value="Chromosome"/>
</dbReference>
<dbReference type="GO" id="GO:0004170">
    <property type="term" value="F:dUTP diphosphatase activity"/>
    <property type="evidence" value="ECO:0007669"/>
    <property type="project" value="UniProtKB-UniRule"/>
</dbReference>
<dbReference type="GO" id="GO:0000287">
    <property type="term" value="F:magnesium ion binding"/>
    <property type="evidence" value="ECO:0007669"/>
    <property type="project" value="UniProtKB-UniRule"/>
</dbReference>
<dbReference type="GO" id="GO:0006226">
    <property type="term" value="P:dUMP biosynthetic process"/>
    <property type="evidence" value="ECO:0007669"/>
    <property type="project" value="UniProtKB-UniRule"/>
</dbReference>
<dbReference type="GO" id="GO:0046081">
    <property type="term" value="P:dUTP catabolic process"/>
    <property type="evidence" value="ECO:0007669"/>
    <property type="project" value="InterPro"/>
</dbReference>
<dbReference type="CDD" id="cd07557">
    <property type="entry name" value="trimeric_dUTPase"/>
    <property type="match status" value="1"/>
</dbReference>
<dbReference type="Gene3D" id="2.70.40.10">
    <property type="match status" value="1"/>
</dbReference>
<dbReference type="HAMAP" id="MF_00116">
    <property type="entry name" value="dUTPase_bact"/>
    <property type="match status" value="1"/>
</dbReference>
<dbReference type="InterPro" id="IPR008181">
    <property type="entry name" value="dUTPase"/>
</dbReference>
<dbReference type="InterPro" id="IPR029054">
    <property type="entry name" value="dUTPase-like"/>
</dbReference>
<dbReference type="InterPro" id="IPR036157">
    <property type="entry name" value="dUTPase-like_sf"/>
</dbReference>
<dbReference type="InterPro" id="IPR033704">
    <property type="entry name" value="dUTPase_trimeric"/>
</dbReference>
<dbReference type="NCBIfam" id="TIGR00576">
    <property type="entry name" value="dut"/>
    <property type="match status" value="1"/>
</dbReference>
<dbReference type="NCBIfam" id="NF001862">
    <property type="entry name" value="PRK00601.1"/>
    <property type="match status" value="1"/>
</dbReference>
<dbReference type="PANTHER" id="PTHR11241">
    <property type="entry name" value="DEOXYURIDINE 5'-TRIPHOSPHATE NUCLEOTIDOHYDROLASE"/>
    <property type="match status" value="1"/>
</dbReference>
<dbReference type="PANTHER" id="PTHR11241:SF0">
    <property type="entry name" value="DEOXYURIDINE 5'-TRIPHOSPHATE NUCLEOTIDOHYDROLASE"/>
    <property type="match status" value="1"/>
</dbReference>
<dbReference type="Pfam" id="PF00692">
    <property type="entry name" value="dUTPase"/>
    <property type="match status" value="1"/>
</dbReference>
<dbReference type="SUPFAM" id="SSF51283">
    <property type="entry name" value="dUTPase-like"/>
    <property type="match status" value="1"/>
</dbReference>
<name>DUT_BDEBA</name>
<reference key="1">
    <citation type="journal article" date="2004" name="Science">
        <title>A predator unmasked: life cycle of Bdellovibrio bacteriovorus from a genomic perspective.</title>
        <authorList>
            <person name="Rendulic S."/>
            <person name="Jagtap P."/>
            <person name="Rosinus A."/>
            <person name="Eppinger M."/>
            <person name="Baar C."/>
            <person name="Lanz C."/>
            <person name="Keller H."/>
            <person name="Lambert C."/>
            <person name="Evans K.J."/>
            <person name="Goesmann A."/>
            <person name="Meyer F."/>
            <person name="Sockett R.E."/>
            <person name="Schuster S.C."/>
        </authorList>
    </citation>
    <scope>NUCLEOTIDE SEQUENCE [LARGE SCALE GENOMIC DNA]</scope>
    <source>
        <strain>ATCC 15356 / DSM 50701 / NCIMB 9529 / HD100</strain>
    </source>
</reference>
<proteinExistence type="inferred from homology"/>
<evidence type="ECO:0000255" key="1">
    <source>
        <dbReference type="HAMAP-Rule" id="MF_00116"/>
    </source>
</evidence>
<feature type="chain" id="PRO_0000182829" description="Deoxyuridine 5'-triphosphate nucleotidohydrolase">
    <location>
        <begin position="1"/>
        <end position="149"/>
    </location>
</feature>
<feature type="binding site" evidence="1">
    <location>
        <begin position="68"/>
        <end position="70"/>
    </location>
    <ligand>
        <name>substrate</name>
    </ligand>
</feature>
<feature type="binding site" evidence="1">
    <location>
        <position position="81"/>
    </location>
    <ligand>
        <name>substrate</name>
    </ligand>
</feature>
<feature type="binding site" evidence="1">
    <location>
        <begin position="85"/>
        <end position="87"/>
    </location>
    <ligand>
        <name>substrate</name>
    </ligand>
</feature>
<feature type="binding site" evidence="1">
    <location>
        <position position="95"/>
    </location>
    <ligand>
        <name>substrate</name>
    </ligand>
</feature>
<accession>P61906</accession>
<organism>
    <name type="scientific">Bdellovibrio bacteriovorus (strain ATCC 15356 / DSM 50701 / NCIMB 9529 / HD100)</name>
    <dbReference type="NCBI Taxonomy" id="264462"/>
    <lineage>
        <taxon>Bacteria</taxon>
        <taxon>Pseudomonadati</taxon>
        <taxon>Bdellovibrionota</taxon>
        <taxon>Bdellovibrionia</taxon>
        <taxon>Bdellovibrionales</taxon>
        <taxon>Pseudobdellovibrionaceae</taxon>
        <taxon>Bdellovibrio</taxon>
    </lineage>
</organism>
<gene>
    <name evidence="1" type="primary">dut</name>
    <name type="ordered locus">Bd1553</name>
</gene>